<protein>
    <recommendedName>
        <fullName evidence="1">DNA-directed RNA polymerase subunit omega</fullName>
        <shortName evidence="1">RNAP omega subunit</shortName>
        <ecNumber evidence="1">2.7.7.6</ecNumber>
    </recommendedName>
    <alternativeName>
        <fullName evidence="1">RNA polymerase omega subunit</fullName>
    </alternativeName>
    <alternativeName>
        <fullName evidence="1">Transcriptase subunit omega</fullName>
    </alternativeName>
</protein>
<keyword id="KW-0240">DNA-directed RNA polymerase</keyword>
<keyword id="KW-0548">Nucleotidyltransferase</keyword>
<keyword id="KW-1185">Reference proteome</keyword>
<keyword id="KW-0804">Transcription</keyword>
<keyword id="KW-0808">Transferase</keyword>
<evidence type="ECO:0000255" key="1">
    <source>
        <dbReference type="HAMAP-Rule" id="MF_00366"/>
    </source>
</evidence>
<reference key="1">
    <citation type="submission" date="2007-11" db="EMBL/GenBank/DDBJ databases">
        <title>Complete genome sequence of Clostridium phytofermentans ISDg.</title>
        <authorList>
            <person name="Leschine S.B."/>
            <person name="Warnick T.A."/>
            <person name="Blanchard J.L."/>
            <person name="Schnell D.J."/>
            <person name="Petit E.L."/>
            <person name="LaTouf W.G."/>
            <person name="Copeland A."/>
            <person name="Lucas S."/>
            <person name="Lapidus A."/>
            <person name="Barry K."/>
            <person name="Glavina del Rio T."/>
            <person name="Dalin E."/>
            <person name="Tice H."/>
            <person name="Pitluck S."/>
            <person name="Kiss H."/>
            <person name="Brettin T."/>
            <person name="Bruce D."/>
            <person name="Detter J.C."/>
            <person name="Han C."/>
            <person name="Kuske C."/>
            <person name="Schmutz J."/>
            <person name="Larimer F."/>
            <person name="Land M."/>
            <person name="Hauser L."/>
            <person name="Kyrpides N."/>
            <person name="Kim E.A."/>
            <person name="Richardson P."/>
        </authorList>
    </citation>
    <scope>NUCLEOTIDE SEQUENCE [LARGE SCALE GENOMIC DNA]</scope>
    <source>
        <strain>ATCC 700394 / DSM 18823 / ISDg</strain>
    </source>
</reference>
<feature type="chain" id="PRO_1000079624" description="DNA-directed RNA polymerase subunit omega">
    <location>
        <begin position="1"/>
        <end position="82"/>
    </location>
</feature>
<accession>A9KPG3</accession>
<dbReference type="EC" id="2.7.7.6" evidence="1"/>
<dbReference type="EMBL" id="CP000885">
    <property type="protein sequence ID" value="ABX43237.1"/>
    <property type="molecule type" value="Genomic_DNA"/>
</dbReference>
<dbReference type="RefSeq" id="WP_012200888.1">
    <property type="nucleotide sequence ID" value="NC_010001.1"/>
</dbReference>
<dbReference type="SMR" id="A9KPG3"/>
<dbReference type="STRING" id="357809.Cphy_2879"/>
<dbReference type="KEGG" id="cpy:Cphy_2879"/>
<dbReference type="eggNOG" id="COG1758">
    <property type="taxonomic scope" value="Bacteria"/>
</dbReference>
<dbReference type="HOGENOM" id="CLU_153189_1_0_9"/>
<dbReference type="OrthoDB" id="9815459at2"/>
<dbReference type="Proteomes" id="UP000000370">
    <property type="component" value="Chromosome"/>
</dbReference>
<dbReference type="GO" id="GO:0000428">
    <property type="term" value="C:DNA-directed RNA polymerase complex"/>
    <property type="evidence" value="ECO:0007669"/>
    <property type="project" value="UniProtKB-KW"/>
</dbReference>
<dbReference type="GO" id="GO:0003677">
    <property type="term" value="F:DNA binding"/>
    <property type="evidence" value="ECO:0007669"/>
    <property type="project" value="UniProtKB-UniRule"/>
</dbReference>
<dbReference type="GO" id="GO:0003899">
    <property type="term" value="F:DNA-directed RNA polymerase activity"/>
    <property type="evidence" value="ECO:0007669"/>
    <property type="project" value="UniProtKB-UniRule"/>
</dbReference>
<dbReference type="GO" id="GO:0006351">
    <property type="term" value="P:DNA-templated transcription"/>
    <property type="evidence" value="ECO:0007669"/>
    <property type="project" value="UniProtKB-UniRule"/>
</dbReference>
<dbReference type="Gene3D" id="3.90.940.10">
    <property type="match status" value="1"/>
</dbReference>
<dbReference type="HAMAP" id="MF_00366">
    <property type="entry name" value="RNApol_bact_RpoZ"/>
    <property type="match status" value="1"/>
</dbReference>
<dbReference type="InterPro" id="IPR003716">
    <property type="entry name" value="DNA-dir_RNA_pol_omega"/>
</dbReference>
<dbReference type="InterPro" id="IPR006110">
    <property type="entry name" value="Pol_omega/Rpo6/RPB6"/>
</dbReference>
<dbReference type="InterPro" id="IPR036161">
    <property type="entry name" value="RPB6/omega-like_sf"/>
</dbReference>
<dbReference type="NCBIfam" id="TIGR00690">
    <property type="entry name" value="rpoZ"/>
    <property type="match status" value="1"/>
</dbReference>
<dbReference type="PANTHER" id="PTHR34476">
    <property type="entry name" value="DNA-DIRECTED RNA POLYMERASE SUBUNIT OMEGA"/>
    <property type="match status" value="1"/>
</dbReference>
<dbReference type="PANTHER" id="PTHR34476:SF1">
    <property type="entry name" value="DNA-DIRECTED RNA POLYMERASE SUBUNIT OMEGA"/>
    <property type="match status" value="1"/>
</dbReference>
<dbReference type="Pfam" id="PF01192">
    <property type="entry name" value="RNA_pol_Rpb6"/>
    <property type="match status" value="1"/>
</dbReference>
<dbReference type="SMART" id="SM01409">
    <property type="entry name" value="RNA_pol_Rpb6"/>
    <property type="match status" value="1"/>
</dbReference>
<dbReference type="SUPFAM" id="SSF63562">
    <property type="entry name" value="RPB6/omega subunit-like"/>
    <property type="match status" value="1"/>
</dbReference>
<name>RPOZ_LACP7</name>
<organism>
    <name type="scientific">Lachnoclostridium phytofermentans (strain ATCC 700394 / DSM 18823 / ISDg)</name>
    <name type="common">Clostridium phytofermentans</name>
    <dbReference type="NCBI Taxonomy" id="357809"/>
    <lineage>
        <taxon>Bacteria</taxon>
        <taxon>Bacillati</taxon>
        <taxon>Bacillota</taxon>
        <taxon>Clostridia</taxon>
        <taxon>Lachnospirales</taxon>
        <taxon>Lachnospiraceae</taxon>
    </lineage>
</organism>
<comment type="function">
    <text evidence="1">Promotes RNA polymerase assembly. Latches the N- and C-terminal regions of the beta' subunit thereby facilitating its interaction with the beta and alpha subunits.</text>
</comment>
<comment type="catalytic activity">
    <reaction evidence="1">
        <text>RNA(n) + a ribonucleoside 5'-triphosphate = RNA(n+1) + diphosphate</text>
        <dbReference type="Rhea" id="RHEA:21248"/>
        <dbReference type="Rhea" id="RHEA-COMP:14527"/>
        <dbReference type="Rhea" id="RHEA-COMP:17342"/>
        <dbReference type="ChEBI" id="CHEBI:33019"/>
        <dbReference type="ChEBI" id="CHEBI:61557"/>
        <dbReference type="ChEBI" id="CHEBI:140395"/>
        <dbReference type="EC" id="2.7.7.6"/>
    </reaction>
</comment>
<comment type="subunit">
    <text evidence="1">The RNAP catalytic core consists of 2 alpha, 1 beta, 1 beta' and 1 omega subunit. When a sigma factor is associated with the core the holoenzyme is formed, which can initiate transcription.</text>
</comment>
<comment type="similarity">
    <text evidence="1">Belongs to the RNA polymerase subunit omega family.</text>
</comment>
<gene>
    <name evidence="1" type="primary">rpoZ</name>
    <name type="ordered locus">Cphy_2879</name>
</gene>
<sequence length="82" mass="9147">MLHPSYNDLMQVVNSEVEPGEQPVVNSRYSIVLATAKRARQIIDGAEPLTESSCNKPLSIAVEELYKSKVKIVSEDDENENE</sequence>
<proteinExistence type="inferred from homology"/>